<dbReference type="EMBL" id="EU118126">
    <property type="protein sequence ID" value="ABV02362.1"/>
    <property type="molecule type" value="Genomic_DNA"/>
</dbReference>
<dbReference type="RefSeq" id="YP_001468322.1">
    <property type="nucleotide sequence ID" value="NC_009808.1"/>
</dbReference>
<dbReference type="SMR" id="A7Y3F7"/>
<dbReference type="GeneID" id="5601244"/>
<dbReference type="GO" id="GO:0009535">
    <property type="term" value="C:chloroplast thylakoid membrane"/>
    <property type="evidence" value="ECO:0007669"/>
    <property type="project" value="UniProtKB-SubCell"/>
</dbReference>
<dbReference type="GO" id="GO:0009539">
    <property type="term" value="C:photosystem II reaction center"/>
    <property type="evidence" value="ECO:0007669"/>
    <property type="project" value="InterPro"/>
</dbReference>
<dbReference type="GO" id="GO:0015979">
    <property type="term" value="P:photosynthesis"/>
    <property type="evidence" value="ECO:0007669"/>
    <property type="project" value="UniProtKB-UniRule"/>
</dbReference>
<dbReference type="Gene3D" id="6.10.250.2070">
    <property type="match status" value="1"/>
</dbReference>
<dbReference type="HAMAP" id="MF_01305">
    <property type="entry name" value="PSII_PsbJ"/>
    <property type="match status" value="1"/>
</dbReference>
<dbReference type="InterPro" id="IPR002682">
    <property type="entry name" value="PSII_PsbJ"/>
</dbReference>
<dbReference type="InterPro" id="IPR037267">
    <property type="entry name" value="PSII_PsbJ_sf"/>
</dbReference>
<dbReference type="NCBIfam" id="NF002722">
    <property type="entry name" value="PRK02565.1"/>
    <property type="match status" value="1"/>
</dbReference>
<dbReference type="PANTHER" id="PTHR34812">
    <property type="entry name" value="PHOTOSYSTEM II REACTION CENTER PROTEIN J"/>
    <property type="match status" value="1"/>
</dbReference>
<dbReference type="PANTHER" id="PTHR34812:SF3">
    <property type="entry name" value="PHOTOSYSTEM II REACTION CENTER PROTEIN J"/>
    <property type="match status" value="1"/>
</dbReference>
<dbReference type="Pfam" id="PF01788">
    <property type="entry name" value="PsbJ"/>
    <property type="match status" value="1"/>
</dbReference>
<dbReference type="SUPFAM" id="SSF161021">
    <property type="entry name" value="Photosystem II reaction center protein J, PsbJ"/>
    <property type="match status" value="1"/>
</dbReference>
<gene>
    <name evidence="1" type="primary">psbJ</name>
</gene>
<protein>
    <recommendedName>
        <fullName evidence="1">Photosystem II reaction center protein J</fullName>
        <shortName evidence="1">PSII-J</shortName>
    </recommendedName>
</protein>
<organism>
    <name type="scientific">Ipomoea purpurea</name>
    <name type="common">Common morning glory</name>
    <name type="synonym">Pharbitis purpurea</name>
    <dbReference type="NCBI Taxonomy" id="4121"/>
    <lineage>
        <taxon>Eukaryota</taxon>
        <taxon>Viridiplantae</taxon>
        <taxon>Streptophyta</taxon>
        <taxon>Embryophyta</taxon>
        <taxon>Tracheophyta</taxon>
        <taxon>Spermatophyta</taxon>
        <taxon>Magnoliopsida</taxon>
        <taxon>eudicotyledons</taxon>
        <taxon>Gunneridae</taxon>
        <taxon>Pentapetalae</taxon>
        <taxon>asterids</taxon>
        <taxon>lamiids</taxon>
        <taxon>Solanales</taxon>
        <taxon>Convolvulaceae</taxon>
        <taxon>Ipomoeeae</taxon>
        <taxon>Ipomoea</taxon>
    </lineage>
</organism>
<comment type="function">
    <text evidence="1">One of the components of the core complex of photosystem II (PSII). PSII is a light-driven water:plastoquinone oxidoreductase that uses light energy to abstract electrons from H(2)O, generating O(2) and a proton gradient subsequently used for ATP formation. It consists of a core antenna complex that captures photons, and an electron transfer chain that converts photonic excitation into a charge separation.</text>
</comment>
<comment type="subunit">
    <text evidence="1">PSII is composed of 1 copy each of membrane proteins PsbA, PsbB, PsbC, PsbD, PsbE, PsbF, PsbH, PsbI, PsbJ, PsbK, PsbL, PsbM, PsbT, PsbX, PsbY, PsbZ, Psb30/Ycf12, at least 3 peripheral proteins of the oxygen-evolving complex and a large number of cofactors. It forms dimeric complexes.</text>
</comment>
<comment type="subcellular location">
    <subcellularLocation>
        <location evidence="1">Plastid</location>
        <location evidence="1">Chloroplast thylakoid membrane</location>
        <topology evidence="1">Single-pass membrane protein</topology>
    </subcellularLocation>
</comment>
<comment type="similarity">
    <text evidence="1">Belongs to the PsbJ family.</text>
</comment>
<name>PSBJ_IPOPU</name>
<reference key="1">
    <citation type="journal article" date="2007" name="BMC Plant Biol.">
        <title>Complete plastid genome sequences suggest strong selection for retention of photosynthetic genes in the parasitic plant genus Cuscuta.</title>
        <authorList>
            <person name="McNeal J.R."/>
            <person name="Kuehl J.V."/>
            <person name="Boore J.L."/>
            <person name="dePamphilis C.W."/>
        </authorList>
    </citation>
    <scope>NUCLEOTIDE SEQUENCE [LARGE SCALE GENOMIC DNA]</scope>
</reference>
<accession>A7Y3F7</accession>
<evidence type="ECO:0000255" key="1">
    <source>
        <dbReference type="HAMAP-Rule" id="MF_01305"/>
    </source>
</evidence>
<geneLocation type="chloroplast"/>
<proteinExistence type="inferred from homology"/>
<keyword id="KW-0150">Chloroplast</keyword>
<keyword id="KW-0472">Membrane</keyword>
<keyword id="KW-0602">Photosynthesis</keyword>
<keyword id="KW-0604">Photosystem II</keyword>
<keyword id="KW-0934">Plastid</keyword>
<keyword id="KW-0674">Reaction center</keyword>
<keyword id="KW-0793">Thylakoid</keyword>
<keyword id="KW-0812">Transmembrane</keyword>
<keyword id="KW-1133">Transmembrane helix</keyword>
<sequence>MADTTGRIPLWIIGTVTGLLVIGLIGIFFYGSYSGLGSSL</sequence>
<feature type="chain" id="PRO_0000322061" description="Photosystem II reaction center protein J">
    <location>
        <begin position="1"/>
        <end position="40"/>
    </location>
</feature>
<feature type="transmembrane region" description="Helical" evidence="1">
    <location>
        <begin position="8"/>
        <end position="28"/>
    </location>
</feature>